<dbReference type="EC" id="2.3.1.275" evidence="1"/>
<dbReference type="EMBL" id="CP001020">
    <property type="protein sequence ID" value="ACJ20297.1"/>
    <property type="molecule type" value="Genomic_DNA"/>
</dbReference>
<dbReference type="RefSeq" id="WP_005770791.1">
    <property type="nucleotide sequence ID" value="NC_011528.1"/>
</dbReference>
<dbReference type="SMR" id="B6J7P8"/>
<dbReference type="KEGG" id="cbc:CbuK_1100"/>
<dbReference type="HOGENOM" id="CLU_081254_0_0_6"/>
<dbReference type="UniPathway" id="UPA00085"/>
<dbReference type="GO" id="GO:0005886">
    <property type="term" value="C:plasma membrane"/>
    <property type="evidence" value="ECO:0007669"/>
    <property type="project" value="UniProtKB-SubCell"/>
</dbReference>
<dbReference type="GO" id="GO:0043772">
    <property type="term" value="F:acyl-phosphate glycerol-3-phosphate acyltransferase activity"/>
    <property type="evidence" value="ECO:0007669"/>
    <property type="project" value="UniProtKB-UniRule"/>
</dbReference>
<dbReference type="GO" id="GO:0008654">
    <property type="term" value="P:phospholipid biosynthetic process"/>
    <property type="evidence" value="ECO:0007669"/>
    <property type="project" value="UniProtKB-UniRule"/>
</dbReference>
<dbReference type="HAMAP" id="MF_01043">
    <property type="entry name" value="PlsY"/>
    <property type="match status" value="1"/>
</dbReference>
<dbReference type="InterPro" id="IPR003811">
    <property type="entry name" value="G3P_acylTferase_PlsY"/>
</dbReference>
<dbReference type="NCBIfam" id="TIGR00023">
    <property type="entry name" value="glycerol-3-phosphate 1-O-acyltransferase PlsY"/>
    <property type="match status" value="1"/>
</dbReference>
<dbReference type="PANTHER" id="PTHR30309:SF0">
    <property type="entry name" value="GLYCEROL-3-PHOSPHATE ACYLTRANSFERASE-RELATED"/>
    <property type="match status" value="1"/>
</dbReference>
<dbReference type="PANTHER" id="PTHR30309">
    <property type="entry name" value="INNER MEMBRANE PROTEIN YGIH"/>
    <property type="match status" value="1"/>
</dbReference>
<dbReference type="Pfam" id="PF02660">
    <property type="entry name" value="G3P_acyltransf"/>
    <property type="match status" value="1"/>
</dbReference>
<dbReference type="SMART" id="SM01207">
    <property type="entry name" value="G3P_acyltransf"/>
    <property type="match status" value="1"/>
</dbReference>
<protein>
    <recommendedName>
        <fullName evidence="1">Glycerol-3-phosphate acyltransferase</fullName>
    </recommendedName>
    <alternativeName>
        <fullName evidence="1">Acyl-PO4 G3P acyltransferase</fullName>
    </alternativeName>
    <alternativeName>
        <fullName evidence="1">Acyl-phosphate--glycerol-3-phosphate acyltransferase</fullName>
    </alternativeName>
    <alternativeName>
        <fullName evidence="1">G3P acyltransferase</fullName>
        <shortName evidence="1">GPAT</shortName>
        <ecNumber evidence="1">2.3.1.275</ecNumber>
    </alternativeName>
    <alternativeName>
        <fullName evidence="1">Lysophosphatidic acid synthase</fullName>
        <shortName evidence="1">LPA synthase</shortName>
    </alternativeName>
</protein>
<proteinExistence type="inferred from homology"/>
<reference key="1">
    <citation type="journal article" date="2009" name="Infect. Immun.">
        <title>Comparative genomics reveal extensive transposon-mediated genomic plasticity and diversity among potential effector proteins within the genus Coxiella.</title>
        <authorList>
            <person name="Beare P.A."/>
            <person name="Unsworth N."/>
            <person name="Andoh M."/>
            <person name="Voth D.E."/>
            <person name="Omsland A."/>
            <person name="Gilk S.D."/>
            <person name="Williams K.P."/>
            <person name="Sobral B.W."/>
            <person name="Kupko J.J. III"/>
            <person name="Porcella S.F."/>
            <person name="Samuel J.E."/>
            <person name="Heinzen R.A."/>
        </authorList>
    </citation>
    <scope>NUCLEOTIDE SEQUENCE [LARGE SCALE GENOMIC DNA]</scope>
    <source>
        <strain>CbuK_Q154</strain>
    </source>
</reference>
<sequence length="193" mass="20861">MAFIISIIIAYLLGSLSFAVIVAKLMKLPDPRTTGSGNAGATNMLRVGGRQAAFYVLLGDAAKGLIAVLIARFLNVQGVSLAFVGLVAVLGHLFPVYFKFRGGKGVATMMGVLLGLSFWIGLFVIATWVIVVSIFRYSSVAALVSAVAAPIYTIIAGRTDYLFPVLIIAILIIWKHWENFQRLRKGTEDKVKL</sequence>
<organism>
    <name type="scientific">Coxiella burnetii (strain CbuK_Q154)</name>
    <name type="common">Coxiella burnetii (strain Q154)</name>
    <dbReference type="NCBI Taxonomy" id="434924"/>
    <lineage>
        <taxon>Bacteria</taxon>
        <taxon>Pseudomonadati</taxon>
        <taxon>Pseudomonadota</taxon>
        <taxon>Gammaproteobacteria</taxon>
        <taxon>Legionellales</taxon>
        <taxon>Coxiellaceae</taxon>
        <taxon>Coxiella</taxon>
    </lineage>
</organism>
<name>PLSY_COXB1</name>
<evidence type="ECO:0000255" key="1">
    <source>
        <dbReference type="HAMAP-Rule" id="MF_01043"/>
    </source>
</evidence>
<comment type="function">
    <text evidence="1">Catalyzes the transfer of an acyl group from acyl-phosphate (acyl-PO(4)) to glycerol-3-phosphate (G3P) to form lysophosphatidic acid (LPA). This enzyme utilizes acyl-phosphate as fatty acyl donor, but not acyl-CoA or acyl-ACP.</text>
</comment>
<comment type="catalytic activity">
    <reaction evidence="1">
        <text>an acyl phosphate + sn-glycerol 3-phosphate = a 1-acyl-sn-glycero-3-phosphate + phosphate</text>
        <dbReference type="Rhea" id="RHEA:34075"/>
        <dbReference type="ChEBI" id="CHEBI:43474"/>
        <dbReference type="ChEBI" id="CHEBI:57597"/>
        <dbReference type="ChEBI" id="CHEBI:57970"/>
        <dbReference type="ChEBI" id="CHEBI:59918"/>
        <dbReference type="EC" id="2.3.1.275"/>
    </reaction>
</comment>
<comment type="pathway">
    <text evidence="1">Lipid metabolism; phospholipid metabolism.</text>
</comment>
<comment type="subunit">
    <text evidence="1">Probably interacts with PlsX.</text>
</comment>
<comment type="subcellular location">
    <subcellularLocation>
        <location evidence="1">Cell inner membrane</location>
        <topology evidence="1">Multi-pass membrane protein</topology>
    </subcellularLocation>
</comment>
<comment type="similarity">
    <text evidence="1">Belongs to the PlsY family.</text>
</comment>
<accession>B6J7P8</accession>
<feature type="chain" id="PRO_1000136076" description="Glycerol-3-phosphate acyltransferase">
    <location>
        <begin position="1"/>
        <end position="193"/>
    </location>
</feature>
<feature type="transmembrane region" description="Helical" evidence="1">
    <location>
        <begin position="2"/>
        <end position="22"/>
    </location>
</feature>
<feature type="transmembrane region" description="Helical" evidence="1">
    <location>
        <begin position="51"/>
        <end position="71"/>
    </location>
</feature>
<feature type="transmembrane region" description="Helical" evidence="1">
    <location>
        <begin position="78"/>
        <end position="98"/>
    </location>
</feature>
<feature type="transmembrane region" description="Helical" evidence="1">
    <location>
        <begin position="112"/>
        <end position="132"/>
    </location>
</feature>
<feature type="transmembrane region" description="Helical" evidence="1">
    <location>
        <begin position="154"/>
        <end position="174"/>
    </location>
</feature>
<keyword id="KW-0997">Cell inner membrane</keyword>
<keyword id="KW-1003">Cell membrane</keyword>
<keyword id="KW-0444">Lipid biosynthesis</keyword>
<keyword id="KW-0443">Lipid metabolism</keyword>
<keyword id="KW-0472">Membrane</keyword>
<keyword id="KW-0594">Phospholipid biosynthesis</keyword>
<keyword id="KW-1208">Phospholipid metabolism</keyword>
<keyword id="KW-0808">Transferase</keyword>
<keyword id="KW-0812">Transmembrane</keyword>
<keyword id="KW-1133">Transmembrane helix</keyword>
<gene>
    <name evidence="1" type="primary">plsY</name>
    <name type="ordered locus">CbuK_1100</name>
</gene>